<proteinExistence type="evidence at protein level"/>
<feature type="chain" id="PRO_0000332251" description="Proline-rich protein 23B">
    <location>
        <begin position="1"/>
        <end position="265"/>
    </location>
</feature>
<feature type="region of interest" description="Disordered" evidence="1">
    <location>
        <begin position="1"/>
        <end position="49"/>
    </location>
</feature>
<feature type="region of interest" description="Disordered" evidence="1">
    <location>
        <begin position="226"/>
        <end position="265"/>
    </location>
</feature>
<feature type="compositionally biased region" description="Low complexity" evidence="1">
    <location>
        <begin position="1"/>
        <end position="18"/>
    </location>
</feature>
<feature type="compositionally biased region" description="Pro residues" evidence="1">
    <location>
        <begin position="226"/>
        <end position="237"/>
    </location>
</feature>
<feature type="compositionally biased region" description="Basic residues" evidence="1">
    <location>
        <begin position="256"/>
        <end position="265"/>
    </location>
</feature>
<protein>
    <recommendedName>
        <fullName>Proline-rich protein 23B</fullName>
    </recommendedName>
</protein>
<comment type="interaction">
    <interactant intactId="EBI-12845180">
        <id>Q6ZRT6</id>
    </interactant>
    <interactant intactId="EBI-11957452">
        <id>Q4LE39-3</id>
        <label>ARID4B</label>
    </interactant>
    <organismsDiffer>false</organismsDiffer>
    <experiments>3</experiments>
</comment>
<comment type="interaction">
    <interactant intactId="EBI-12845180">
        <id>Q6ZRT6</id>
    </interactant>
    <interactant intactId="EBI-11524452">
        <id>Q8N9N5-2</id>
        <label>BANP</label>
    </interactant>
    <organismsDiffer>false</organismsDiffer>
    <experiments>3</experiments>
</comment>
<comment type="interaction">
    <interactant intactId="EBI-12845180">
        <id>Q6ZRT6</id>
    </interactant>
    <interactant intactId="EBI-6658203">
        <id>Q86YD7</id>
        <label>FAM90A1</label>
    </interactant>
    <organismsDiffer>false</organismsDiffer>
    <experiments>3</experiments>
</comment>
<comment type="interaction">
    <interactant intactId="EBI-12845180">
        <id>Q6ZRT6</id>
    </interactant>
    <interactant intactId="EBI-11955401">
        <id>Q86VF2-5</id>
        <label>IGFN1</label>
    </interactant>
    <organismsDiffer>false</organismsDiffer>
    <experiments>3</experiments>
</comment>
<comment type="interaction">
    <interactant intactId="EBI-12845180">
        <id>Q6ZRT6</id>
    </interactant>
    <interactant intactId="EBI-741158">
        <id>Q96HA8</id>
        <label>NTAQ1</label>
    </interactant>
    <organismsDiffer>false</organismsDiffer>
    <experiments>3</experiments>
</comment>
<comment type="interaction">
    <interactant intactId="EBI-12845180">
        <id>Q6ZRT6</id>
    </interactant>
    <interactant intactId="EBI-6874731">
        <id>O15231</id>
        <label>ZNF185</label>
    </interactant>
    <organismsDiffer>false</organismsDiffer>
    <experiments>3</experiments>
</comment>
<comment type="similarity">
    <text evidence="2">Belongs to the PRR23 family.</text>
</comment>
<sequence length="265" mass="28269">MVSRPRSPSAFPAPWWGQQPGGPGPAKRLRLEEPAGPEPRAAPSLEDPAGDPAVDALTSIVVLAAGCALRVPLDDVDLVLEPAPTSILRVSLGGHTLILIPEVLLSSVDERSGAQHDSSAGLEVDVFLGAVREDVVVELEFCASVPEIAAQEEAYEEDADPEFPELRMDSPTGSAAGLYPSSRSMFIPYREGPIPEPCALAPNPSSERRSPRPIFDLEFRLLEPVPSSPLQPLPPSPCVGSPGPHARSPLPERPPCKARRRLFQA</sequence>
<accession>Q6ZRT6</accession>
<accession>B2RNV9</accession>
<reference key="1">
    <citation type="journal article" date="2004" name="Nat. Genet.">
        <title>Complete sequencing and characterization of 21,243 full-length human cDNAs.</title>
        <authorList>
            <person name="Ota T."/>
            <person name="Suzuki Y."/>
            <person name="Nishikawa T."/>
            <person name="Otsuki T."/>
            <person name="Sugiyama T."/>
            <person name="Irie R."/>
            <person name="Wakamatsu A."/>
            <person name="Hayashi K."/>
            <person name="Sato H."/>
            <person name="Nagai K."/>
            <person name="Kimura K."/>
            <person name="Makita H."/>
            <person name="Sekine M."/>
            <person name="Obayashi M."/>
            <person name="Nishi T."/>
            <person name="Shibahara T."/>
            <person name="Tanaka T."/>
            <person name="Ishii S."/>
            <person name="Yamamoto J."/>
            <person name="Saito K."/>
            <person name="Kawai Y."/>
            <person name="Isono Y."/>
            <person name="Nakamura Y."/>
            <person name="Nagahari K."/>
            <person name="Murakami K."/>
            <person name="Yasuda T."/>
            <person name="Iwayanagi T."/>
            <person name="Wagatsuma M."/>
            <person name="Shiratori A."/>
            <person name="Sudo H."/>
            <person name="Hosoiri T."/>
            <person name="Kaku Y."/>
            <person name="Kodaira H."/>
            <person name="Kondo H."/>
            <person name="Sugawara M."/>
            <person name="Takahashi M."/>
            <person name="Kanda K."/>
            <person name="Yokoi T."/>
            <person name="Furuya T."/>
            <person name="Kikkawa E."/>
            <person name="Omura Y."/>
            <person name="Abe K."/>
            <person name="Kamihara K."/>
            <person name="Katsuta N."/>
            <person name="Sato K."/>
            <person name="Tanikawa M."/>
            <person name="Yamazaki M."/>
            <person name="Ninomiya K."/>
            <person name="Ishibashi T."/>
            <person name="Yamashita H."/>
            <person name="Murakawa K."/>
            <person name="Fujimori K."/>
            <person name="Tanai H."/>
            <person name="Kimata M."/>
            <person name="Watanabe M."/>
            <person name="Hiraoka S."/>
            <person name="Chiba Y."/>
            <person name="Ishida S."/>
            <person name="Ono Y."/>
            <person name="Takiguchi S."/>
            <person name="Watanabe S."/>
            <person name="Yosida M."/>
            <person name="Hotuta T."/>
            <person name="Kusano J."/>
            <person name="Kanehori K."/>
            <person name="Takahashi-Fujii A."/>
            <person name="Hara H."/>
            <person name="Tanase T.-O."/>
            <person name="Nomura Y."/>
            <person name="Togiya S."/>
            <person name="Komai F."/>
            <person name="Hara R."/>
            <person name="Takeuchi K."/>
            <person name="Arita M."/>
            <person name="Imose N."/>
            <person name="Musashino K."/>
            <person name="Yuuki H."/>
            <person name="Oshima A."/>
            <person name="Sasaki N."/>
            <person name="Aotsuka S."/>
            <person name="Yoshikawa Y."/>
            <person name="Matsunawa H."/>
            <person name="Ichihara T."/>
            <person name="Shiohata N."/>
            <person name="Sano S."/>
            <person name="Moriya S."/>
            <person name="Momiyama H."/>
            <person name="Satoh N."/>
            <person name="Takami S."/>
            <person name="Terashima Y."/>
            <person name="Suzuki O."/>
            <person name="Nakagawa S."/>
            <person name="Senoh A."/>
            <person name="Mizoguchi H."/>
            <person name="Goto Y."/>
            <person name="Shimizu F."/>
            <person name="Wakebe H."/>
            <person name="Hishigaki H."/>
            <person name="Watanabe T."/>
            <person name="Sugiyama A."/>
            <person name="Takemoto M."/>
            <person name="Kawakami B."/>
            <person name="Yamazaki M."/>
            <person name="Watanabe K."/>
            <person name="Kumagai A."/>
            <person name="Itakura S."/>
            <person name="Fukuzumi Y."/>
            <person name="Fujimori Y."/>
            <person name="Komiyama M."/>
            <person name="Tashiro H."/>
            <person name="Tanigami A."/>
            <person name="Fujiwara T."/>
            <person name="Ono T."/>
            <person name="Yamada K."/>
            <person name="Fujii Y."/>
            <person name="Ozaki K."/>
            <person name="Hirao M."/>
            <person name="Ohmori Y."/>
            <person name="Kawabata A."/>
            <person name="Hikiji T."/>
            <person name="Kobatake N."/>
            <person name="Inagaki H."/>
            <person name="Ikema Y."/>
            <person name="Okamoto S."/>
            <person name="Okitani R."/>
            <person name="Kawakami T."/>
            <person name="Noguchi S."/>
            <person name="Itoh T."/>
            <person name="Shigeta K."/>
            <person name="Senba T."/>
            <person name="Matsumura K."/>
            <person name="Nakajima Y."/>
            <person name="Mizuno T."/>
            <person name="Morinaga M."/>
            <person name="Sasaki M."/>
            <person name="Togashi T."/>
            <person name="Oyama M."/>
            <person name="Hata H."/>
            <person name="Watanabe M."/>
            <person name="Komatsu T."/>
            <person name="Mizushima-Sugano J."/>
            <person name="Satoh T."/>
            <person name="Shirai Y."/>
            <person name="Takahashi Y."/>
            <person name="Nakagawa K."/>
            <person name="Okumura K."/>
            <person name="Nagase T."/>
            <person name="Nomura N."/>
            <person name="Kikuchi H."/>
            <person name="Masuho Y."/>
            <person name="Yamashita R."/>
            <person name="Nakai K."/>
            <person name="Yada T."/>
            <person name="Nakamura Y."/>
            <person name="Ohara O."/>
            <person name="Isogai T."/>
            <person name="Sugano S."/>
        </authorList>
    </citation>
    <scope>NUCLEOTIDE SEQUENCE [LARGE SCALE MRNA]</scope>
    <source>
        <tissue>Testis</tissue>
    </source>
</reference>
<reference key="2">
    <citation type="journal article" date="2004" name="Genome Res.">
        <title>The status, quality, and expansion of the NIH full-length cDNA project: the Mammalian Gene Collection (MGC).</title>
        <authorList>
            <consortium name="The MGC Project Team"/>
        </authorList>
    </citation>
    <scope>NUCLEOTIDE SEQUENCE [LARGE SCALE MRNA]</scope>
    <source>
        <tissue>Testis</tissue>
    </source>
</reference>
<keyword id="KW-1185">Reference proteome</keyword>
<evidence type="ECO:0000256" key="1">
    <source>
        <dbReference type="SAM" id="MobiDB-lite"/>
    </source>
</evidence>
<evidence type="ECO:0000305" key="2"/>
<organism>
    <name type="scientific">Homo sapiens</name>
    <name type="common">Human</name>
    <dbReference type="NCBI Taxonomy" id="9606"/>
    <lineage>
        <taxon>Eukaryota</taxon>
        <taxon>Metazoa</taxon>
        <taxon>Chordata</taxon>
        <taxon>Craniata</taxon>
        <taxon>Vertebrata</taxon>
        <taxon>Euteleostomi</taxon>
        <taxon>Mammalia</taxon>
        <taxon>Eutheria</taxon>
        <taxon>Euarchontoglires</taxon>
        <taxon>Primates</taxon>
        <taxon>Haplorrhini</taxon>
        <taxon>Catarrhini</taxon>
        <taxon>Hominidae</taxon>
        <taxon>Homo</taxon>
    </lineage>
</organism>
<gene>
    <name type="primary">PRR23B</name>
</gene>
<name>PR23B_HUMAN</name>
<dbReference type="EMBL" id="AK127998">
    <property type="protein sequence ID" value="BAC87223.1"/>
    <property type="molecule type" value="mRNA"/>
</dbReference>
<dbReference type="EMBL" id="BC137145">
    <property type="protein sequence ID" value="AAI37146.1"/>
    <property type="molecule type" value="mRNA"/>
</dbReference>
<dbReference type="EMBL" id="BC137146">
    <property type="protein sequence ID" value="AAI37147.1"/>
    <property type="molecule type" value="mRNA"/>
</dbReference>
<dbReference type="CCDS" id="CCDS33868.1"/>
<dbReference type="RefSeq" id="NP_001013672.1">
    <property type="nucleotide sequence ID" value="NM_001013650.2"/>
</dbReference>
<dbReference type="BioGRID" id="133002">
    <property type="interactions" value="7"/>
</dbReference>
<dbReference type="FunCoup" id="Q6ZRT6">
    <property type="interactions" value="1"/>
</dbReference>
<dbReference type="IntAct" id="Q6ZRT6">
    <property type="interactions" value="6"/>
</dbReference>
<dbReference type="STRING" id="9606.ENSP00000328768"/>
<dbReference type="iPTMnet" id="Q6ZRT6"/>
<dbReference type="PhosphoSitePlus" id="Q6ZRT6"/>
<dbReference type="BioMuta" id="PRR23B"/>
<dbReference type="DMDM" id="74711249"/>
<dbReference type="MassIVE" id="Q6ZRT6"/>
<dbReference type="PaxDb" id="9606-ENSP00000328768"/>
<dbReference type="DNASU" id="389151"/>
<dbReference type="Ensembl" id="ENST00000329447.5">
    <property type="protein sequence ID" value="ENSP00000328768.5"/>
    <property type="gene ID" value="ENSG00000184814.5"/>
</dbReference>
<dbReference type="GeneID" id="389151"/>
<dbReference type="KEGG" id="hsa:389151"/>
<dbReference type="MANE-Select" id="ENST00000329447.5">
    <property type="protein sequence ID" value="ENSP00000328768.5"/>
    <property type="RefSeq nucleotide sequence ID" value="NM_001013650.2"/>
    <property type="RefSeq protein sequence ID" value="NP_001013672.1"/>
</dbReference>
<dbReference type="UCSC" id="uc003esy.1">
    <property type="organism name" value="human"/>
</dbReference>
<dbReference type="AGR" id="HGNC:33764"/>
<dbReference type="CTD" id="389151"/>
<dbReference type="GeneCards" id="PRR23B"/>
<dbReference type="HGNC" id="HGNC:33764">
    <property type="gene designation" value="PRR23B"/>
</dbReference>
<dbReference type="HPA" id="ENSG00000184814">
    <property type="expression patterns" value="Tissue enriched (testis)"/>
</dbReference>
<dbReference type="neXtProt" id="NX_Q6ZRT6"/>
<dbReference type="PharmGKB" id="PA165698144"/>
<dbReference type="VEuPathDB" id="HostDB:ENSG00000184814"/>
<dbReference type="eggNOG" id="ENOG502RU0G">
    <property type="taxonomic scope" value="Eukaryota"/>
</dbReference>
<dbReference type="GeneTree" id="ENSGT00390000007772"/>
<dbReference type="HOGENOM" id="CLU_090685_0_0_1"/>
<dbReference type="InParanoid" id="Q6ZRT6"/>
<dbReference type="OMA" id="SMFIPYR"/>
<dbReference type="OrthoDB" id="9717112at2759"/>
<dbReference type="PAN-GO" id="Q6ZRT6">
    <property type="GO annotations" value="0 GO annotations based on evolutionary models"/>
</dbReference>
<dbReference type="PhylomeDB" id="Q6ZRT6"/>
<dbReference type="TreeFam" id="TF338612"/>
<dbReference type="PathwayCommons" id="Q6ZRT6"/>
<dbReference type="SignaLink" id="Q6ZRT6"/>
<dbReference type="BioGRID-ORCS" id="389151">
    <property type="hits" value="13 hits in 1100 CRISPR screens"/>
</dbReference>
<dbReference type="GenomeRNAi" id="389151"/>
<dbReference type="Pharos" id="Q6ZRT6">
    <property type="development level" value="Tdark"/>
</dbReference>
<dbReference type="PRO" id="PR:Q6ZRT6"/>
<dbReference type="Proteomes" id="UP000005640">
    <property type="component" value="Chromosome 3"/>
</dbReference>
<dbReference type="RNAct" id="Q6ZRT6">
    <property type="molecule type" value="protein"/>
</dbReference>
<dbReference type="Bgee" id="ENSG00000184814">
    <property type="expression patterns" value="Expressed in right testis and 1 other cell type or tissue"/>
</dbReference>
<dbReference type="InterPro" id="IPR018903">
    <property type="entry name" value="PRR23"/>
</dbReference>
<dbReference type="PANTHER" id="PTHR31813">
    <property type="entry name" value="PROLINE-RICH PROTEIN 23B"/>
    <property type="match status" value="1"/>
</dbReference>
<dbReference type="PANTHER" id="PTHR31813:SF18">
    <property type="entry name" value="PROLINE-RICH PROTEIN 23B"/>
    <property type="match status" value="1"/>
</dbReference>
<dbReference type="Pfam" id="PF10630">
    <property type="entry name" value="DUF2476"/>
    <property type="match status" value="1"/>
</dbReference>